<comment type="function">
    <text evidence="1">Catalyzes the pyruvoyl-dependent decarboxylation of aspartate to produce beta-alanine.</text>
</comment>
<comment type="catalytic activity">
    <reaction evidence="1">
        <text>L-aspartate + H(+) = beta-alanine + CO2</text>
        <dbReference type="Rhea" id="RHEA:19497"/>
        <dbReference type="ChEBI" id="CHEBI:15378"/>
        <dbReference type="ChEBI" id="CHEBI:16526"/>
        <dbReference type="ChEBI" id="CHEBI:29991"/>
        <dbReference type="ChEBI" id="CHEBI:57966"/>
        <dbReference type="EC" id="4.1.1.11"/>
    </reaction>
</comment>
<comment type="cofactor">
    <cofactor evidence="1">
        <name>pyruvate</name>
        <dbReference type="ChEBI" id="CHEBI:15361"/>
    </cofactor>
    <text evidence="1">Binds 1 pyruvoyl group covalently per subunit.</text>
</comment>
<comment type="pathway">
    <text evidence="1">Cofactor biosynthesis; (R)-pantothenate biosynthesis; beta-alanine from L-aspartate: step 1/1.</text>
</comment>
<comment type="subunit">
    <text evidence="1">Heterooctamer of four alpha and four beta subunits.</text>
</comment>
<comment type="subcellular location">
    <subcellularLocation>
        <location evidence="1">Cytoplasm</location>
    </subcellularLocation>
</comment>
<comment type="PTM">
    <text evidence="1">Is synthesized initially as an inactive proenzyme, which is activated by self-cleavage at a specific serine bond to produce a beta-subunit with a hydroxyl group at its C-terminus and an alpha-subunit with a pyruvoyl group at its N-terminus.</text>
</comment>
<comment type="similarity">
    <text evidence="1">Belongs to the PanD family.</text>
</comment>
<gene>
    <name evidence="1" type="primary">panD</name>
    <name type="ordered locus">MAV_0552</name>
</gene>
<proteinExistence type="inferred from homology"/>
<feature type="chain" id="PRO_0000307017" description="Aspartate 1-decarboxylase beta chain" evidence="1">
    <location>
        <begin position="1"/>
        <end position="24"/>
    </location>
</feature>
<feature type="chain" id="PRO_0000307018" description="Aspartate 1-decarboxylase alpha chain" evidence="1">
    <location>
        <begin position="25"/>
        <end position="143"/>
    </location>
</feature>
<feature type="active site" description="Schiff-base intermediate with substrate; via pyruvic acid" evidence="1">
    <location>
        <position position="25"/>
    </location>
</feature>
<feature type="active site" description="Proton donor" evidence="1">
    <location>
        <position position="58"/>
    </location>
</feature>
<feature type="binding site" evidence="1">
    <location>
        <position position="57"/>
    </location>
    <ligand>
        <name>substrate</name>
    </ligand>
</feature>
<feature type="binding site" evidence="1">
    <location>
        <begin position="73"/>
        <end position="75"/>
    </location>
    <ligand>
        <name>substrate</name>
    </ligand>
</feature>
<feature type="modified residue" description="Pyruvic acid (Ser)" evidence="1">
    <location>
        <position position="25"/>
    </location>
</feature>
<accession>A0QA94</accession>
<keyword id="KW-0068">Autocatalytic cleavage</keyword>
<keyword id="KW-0963">Cytoplasm</keyword>
<keyword id="KW-0210">Decarboxylase</keyword>
<keyword id="KW-0456">Lyase</keyword>
<keyword id="KW-0566">Pantothenate biosynthesis</keyword>
<keyword id="KW-0670">Pyruvate</keyword>
<keyword id="KW-0704">Schiff base</keyword>
<keyword id="KW-0865">Zymogen</keyword>
<dbReference type="EC" id="4.1.1.11" evidence="1"/>
<dbReference type="EMBL" id="CP000479">
    <property type="protein sequence ID" value="ABK69136.1"/>
    <property type="molecule type" value="Genomic_DNA"/>
</dbReference>
<dbReference type="RefSeq" id="WP_003875613.1">
    <property type="nucleotide sequence ID" value="NC_008595.1"/>
</dbReference>
<dbReference type="SMR" id="A0QA94"/>
<dbReference type="GeneID" id="75268404"/>
<dbReference type="KEGG" id="mav:MAV_0552"/>
<dbReference type="HOGENOM" id="CLU_115305_2_0_11"/>
<dbReference type="UniPathway" id="UPA00028">
    <property type="reaction ID" value="UER00002"/>
</dbReference>
<dbReference type="Proteomes" id="UP000001574">
    <property type="component" value="Chromosome"/>
</dbReference>
<dbReference type="GO" id="GO:0005829">
    <property type="term" value="C:cytosol"/>
    <property type="evidence" value="ECO:0007669"/>
    <property type="project" value="TreeGrafter"/>
</dbReference>
<dbReference type="GO" id="GO:0004068">
    <property type="term" value="F:aspartate 1-decarboxylase activity"/>
    <property type="evidence" value="ECO:0007669"/>
    <property type="project" value="UniProtKB-UniRule"/>
</dbReference>
<dbReference type="GO" id="GO:0006523">
    <property type="term" value="P:alanine biosynthetic process"/>
    <property type="evidence" value="ECO:0007669"/>
    <property type="project" value="InterPro"/>
</dbReference>
<dbReference type="GO" id="GO:0015940">
    <property type="term" value="P:pantothenate biosynthetic process"/>
    <property type="evidence" value="ECO:0007669"/>
    <property type="project" value="UniProtKB-UniRule"/>
</dbReference>
<dbReference type="CDD" id="cd06919">
    <property type="entry name" value="Asp_decarbox"/>
    <property type="match status" value="1"/>
</dbReference>
<dbReference type="Gene3D" id="2.40.40.20">
    <property type="match status" value="1"/>
</dbReference>
<dbReference type="HAMAP" id="MF_00446">
    <property type="entry name" value="PanD"/>
    <property type="match status" value="1"/>
</dbReference>
<dbReference type="InterPro" id="IPR009010">
    <property type="entry name" value="Asp_de-COase-like_dom_sf"/>
</dbReference>
<dbReference type="InterPro" id="IPR003190">
    <property type="entry name" value="Asp_decarbox"/>
</dbReference>
<dbReference type="NCBIfam" id="TIGR00223">
    <property type="entry name" value="panD"/>
    <property type="match status" value="1"/>
</dbReference>
<dbReference type="PANTHER" id="PTHR21012">
    <property type="entry name" value="ASPARTATE 1-DECARBOXYLASE"/>
    <property type="match status" value="1"/>
</dbReference>
<dbReference type="PANTHER" id="PTHR21012:SF0">
    <property type="entry name" value="ASPARTATE 1-DECARBOXYLASE"/>
    <property type="match status" value="1"/>
</dbReference>
<dbReference type="Pfam" id="PF02261">
    <property type="entry name" value="Asp_decarbox"/>
    <property type="match status" value="1"/>
</dbReference>
<dbReference type="PIRSF" id="PIRSF006246">
    <property type="entry name" value="Asp_decarbox"/>
    <property type="match status" value="1"/>
</dbReference>
<dbReference type="SUPFAM" id="SSF50692">
    <property type="entry name" value="ADC-like"/>
    <property type="match status" value="1"/>
</dbReference>
<name>PAND_MYCA1</name>
<evidence type="ECO:0000255" key="1">
    <source>
        <dbReference type="HAMAP-Rule" id="MF_00446"/>
    </source>
</evidence>
<organism>
    <name type="scientific">Mycobacterium avium (strain 104)</name>
    <dbReference type="NCBI Taxonomy" id="243243"/>
    <lineage>
        <taxon>Bacteria</taxon>
        <taxon>Bacillati</taxon>
        <taxon>Actinomycetota</taxon>
        <taxon>Actinomycetes</taxon>
        <taxon>Mycobacteriales</taxon>
        <taxon>Mycobacteriaceae</taxon>
        <taxon>Mycobacterium</taxon>
        <taxon>Mycobacterium avium complex (MAC)</taxon>
    </lineage>
</organism>
<reference key="1">
    <citation type="submission" date="2006-10" db="EMBL/GenBank/DDBJ databases">
        <authorList>
            <person name="Fleischmann R.D."/>
            <person name="Dodson R.J."/>
            <person name="Haft D.H."/>
            <person name="Merkel J.S."/>
            <person name="Nelson W.C."/>
            <person name="Fraser C.M."/>
        </authorList>
    </citation>
    <scope>NUCLEOTIDE SEQUENCE [LARGE SCALE GENOMIC DNA]</scope>
    <source>
        <strain>104</strain>
    </source>
</reference>
<sequence length="143" mass="15303">MLRTMLKSKIHRATVTQADLHYVGSVTIDADLMDAADLLEGEQVTIVDIDNGARLVTYAITGERGSGVIGINGAAAHLVHPGDLVILIAYGTMEEAEARAYQPRIVFVDADNKPVDLGHDPAFVPDFEIAGAAELLDPRIVAR</sequence>
<protein>
    <recommendedName>
        <fullName evidence="1">Aspartate 1-decarboxylase</fullName>
        <ecNumber evidence="1">4.1.1.11</ecNumber>
    </recommendedName>
    <alternativeName>
        <fullName evidence="1">Aspartate alpha-decarboxylase</fullName>
    </alternativeName>
    <component>
        <recommendedName>
            <fullName evidence="1">Aspartate 1-decarboxylase beta chain</fullName>
        </recommendedName>
    </component>
    <component>
        <recommendedName>
            <fullName evidence="1">Aspartate 1-decarboxylase alpha chain</fullName>
        </recommendedName>
    </component>
</protein>